<evidence type="ECO:0000255" key="1">
    <source>
        <dbReference type="HAMAP-Rule" id="MF_00246"/>
    </source>
</evidence>
<reference key="1">
    <citation type="submission" date="2008-12" db="EMBL/GenBank/DDBJ databases">
        <title>Complete sequence of Chloroflexus aggregans DSM 9485.</title>
        <authorList>
            <consortium name="US DOE Joint Genome Institute"/>
            <person name="Lucas S."/>
            <person name="Copeland A."/>
            <person name="Lapidus A."/>
            <person name="Glavina del Rio T."/>
            <person name="Dalin E."/>
            <person name="Tice H."/>
            <person name="Pitluck S."/>
            <person name="Foster B."/>
            <person name="Larimer F."/>
            <person name="Land M."/>
            <person name="Hauser L."/>
            <person name="Kyrpides N."/>
            <person name="Mikhailova N."/>
            <person name="Bryant D.A."/>
            <person name="Richardson P."/>
        </authorList>
    </citation>
    <scope>NUCLEOTIDE SEQUENCE [LARGE SCALE GENOMIC DNA]</scope>
    <source>
        <strain>MD-66 / DSM 9485</strain>
    </source>
</reference>
<dbReference type="EC" id="2.7.1.6" evidence="1"/>
<dbReference type="EMBL" id="CP001337">
    <property type="protein sequence ID" value="ACL23122.1"/>
    <property type="molecule type" value="Genomic_DNA"/>
</dbReference>
<dbReference type="RefSeq" id="WP_012615488.1">
    <property type="nucleotide sequence ID" value="NC_011831.1"/>
</dbReference>
<dbReference type="SMR" id="B8GCS2"/>
<dbReference type="STRING" id="326427.Cagg_0171"/>
<dbReference type="KEGG" id="cag:Cagg_0171"/>
<dbReference type="eggNOG" id="COG0153">
    <property type="taxonomic scope" value="Bacteria"/>
</dbReference>
<dbReference type="HOGENOM" id="CLU_017814_2_1_0"/>
<dbReference type="OrthoDB" id="250531at2"/>
<dbReference type="UniPathway" id="UPA00214"/>
<dbReference type="Proteomes" id="UP000002508">
    <property type="component" value="Chromosome"/>
</dbReference>
<dbReference type="GO" id="GO:0005829">
    <property type="term" value="C:cytosol"/>
    <property type="evidence" value="ECO:0007669"/>
    <property type="project" value="TreeGrafter"/>
</dbReference>
<dbReference type="GO" id="GO:0005524">
    <property type="term" value="F:ATP binding"/>
    <property type="evidence" value="ECO:0007669"/>
    <property type="project" value="UniProtKB-UniRule"/>
</dbReference>
<dbReference type="GO" id="GO:0004335">
    <property type="term" value="F:galactokinase activity"/>
    <property type="evidence" value="ECO:0007669"/>
    <property type="project" value="UniProtKB-UniRule"/>
</dbReference>
<dbReference type="GO" id="GO:0000287">
    <property type="term" value="F:magnesium ion binding"/>
    <property type="evidence" value="ECO:0007669"/>
    <property type="project" value="UniProtKB-UniRule"/>
</dbReference>
<dbReference type="GO" id="GO:0006012">
    <property type="term" value="P:galactose metabolic process"/>
    <property type="evidence" value="ECO:0007669"/>
    <property type="project" value="UniProtKB-UniRule"/>
</dbReference>
<dbReference type="FunFam" id="3.30.230.10:FF:000017">
    <property type="entry name" value="Galactokinase"/>
    <property type="match status" value="1"/>
</dbReference>
<dbReference type="FunFam" id="3.30.70.890:FF:000001">
    <property type="entry name" value="Galactokinase"/>
    <property type="match status" value="1"/>
</dbReference>
<dbReference type="Gene3D" id="3.30.230.10">
    <property type="match status" value="1"/>
</dbReference>
<dbReference type="Gene3D" id="3.30.70.890">
    <property type="entry name" value="GHMP kinase, C-terminal domain"/>
    <property type="match status" value="1"/>
</dbReference>
<dbReference type="HAMAP" id="MF_00246">
    <property type="entry name" value="Galactokinase"/>
    <property type="match status" value="1"/>
</dbReference>
<dbReference type="InterPro" id="IPR000705">
    <property type="entry name" value="Galactokinase"/>
</dbReference>
<dbReference type="InterPro" id="IPR022963">
    <property type="entry name" value="Galactokinase_bac"/>
</dbReference>
<dbReference type="InterPro" id="IPR019741">
    <property type="entry name" value="Galactokinase_CS"/>
</dbReference>
<dbReference type="InterPro" id="IPR019539">
    <property type="entry name" value="GalKase_N"/>
</dbReference>
<dbReference type="InterPro" id="IPR013750">
    <property type="entry name" value="GHMP_kinase_C_dom"/>
</dbReference>
<dbReference type="InterPro" id="IPR036554">
    <property type="entry name" value="GHMP_kinase_C_sf"/>
</dbReference>
<dbReference type="InterPro" id="IPR006204">
    <property type="entry name" value="GHMP_kinase_N_dom"/>
</dbReference>
<dbReference type="InterPro" id="IPR006203">
    <property type="entry name" value="GHMP_knse_ATP-bd_CS"/>
</dbReference>
<dbReference type="InterPro" id="IPR006206">
    <property type="entry name" value="Mevalonate/galactokinase"/>
</dbReference>
<dbReference type="InterPro" id="IPR020568">
    <property type="entry name" value="Ribosomal_Su5_D2-typ_SF"/>
</dbReference>
<dbReference type="InterPro" id="IPR014721">
    <property type="entry name" value="Ribsml_uS5_D2-typ_fold_subgr"/>
</dbReference>
<dbReference type="NCBIfam" id="TIGR00131">
    <property type="entry name" value="gal_kin"/>
    <property type="match status" value="1"/>
</dbReference>
<dbReference type="PANTHER" id="PTHR10457:SF7">
    <property type="entry name" value="GALACTOKINASE-RELATED"/>
    <property type="match status" value="1"/>
</dbReference>
<dbReference type="PANTHER" id="PTHR10457">
    <property type="entry name" value="MEVALONATE KINASE/GALACTOKINASE"/>
    <property type="match status" value="1"/>
</dbReference>
<dbReference type="Pfam" id="PF10509">
    <property type="entry name" value="GalKase_gal_bdg"/>
    <property type="match status" value="1"/>
</dbReference>
<dbReference type="Pfam" id="PF08544">
    <property type="entry name" value="GHMP_kinases_C"/>
    <property type="match status" value="1"/>
</dbReference>
<dbReference type="Pfam" id="PF00288">
    <property type="entry name" value="GHMP_kinases_N"/>
    <property type="match status" value="1"/>
</dbReference>
<dbReference type="PIRSF" id="PIRSF000530">
    <property type="entry name" value="Galactokinase"/>
    <property type="match status" value="1"/>
</dbReference>
<dbReference type="PRINTS" id="PR00473">
    <property type="entry name" value="GALCTOKINASE"/>
</dbReference>
<dbReference type="PRINTS" id="PR00959">
    <property type="entry name" value="MEVGALKINASE"/>
</dbReference>
<dbReference type="SUPFAM" id="SSF55060">
    <property type="entry name" value="GHMP Kinase, C-terminal domain"/>
    <property type="match status" value="1"/>
</dbReference>
<dbReference type="SUPFAM" id="SSF54211">
    <property type="entry name" value="Ribosomal protein S5 domain 2-like"/>
    <property type="match status" value="1"/>
</dbReference>
<dbReference type="PROSITE" id="PS00106">
    <property type="entry name" value="GALACTOKINASE"/>
    <property type="match status" value="1"/>
</dbReference>
<dbReference type="PROSITE" id="PS00627">
    <property type="entry name" value="GHMP_KINASES_ATP"/>
    <property type="match status" value="1"/>
</dbReference>
<name>GAL1_CHLAD</name>
<gene>
    <name evidence="1" type="primary">galK</name>
    <name type="ordered locus">Cagg_0171</name>
</gene>
<accession>B8GCS2</accession>
<comment type="function">
    <text evidence="1">Catalyzes the transfer of the gamma-phosphate of ATP to D-galactose to form alpha-D-galactose-1-phosphate (Gal-1-P).</text>
</comment>
<comment type="catalytic activity">
    <reaction evidence="1">
        <text>alpha-D-galactose + ATP = alpha-D-galactose 1-phosphate + ADP + H(+)</text>
        <dbReference type="Rhea" id="RHEA:13553"/>
        <dbReference type="ChEBI" id="CHEBI:15378"/>
        <dbReference type="ChEBI" id="CHEBI:28061"/>
        <dbReference type="ChEBI" id="CHEBI:30616"/>
        <dbReference type="ChEBI" id="CHEBI:58336"/>
        <dbReference type="ChEBI" id="CHEBI:456216"/>
        <dbReference type="EC" id="2.7.1.6"/>
    </reaction>
</comment>
<comment type="pathway">
    <text evidence="1">Carbohydrate metabolism; galactose metabolism.</text>
</comment>
<comment type="subcellular location">
    <subcellularLocation>
        <location evidence="1">Cytoplasm</location>
    </subcellularLocation>
</comment>
<comment type="similarity">
    <text evidence="1">Belongs to the GHMP kinase family. GalK subfamily.</text>
</comment>
<feature type="chain" id="PRO_1000125375" description="Galactokinase">
    <location>
        <begin position="1"/>
        <end position="390"/>
    </location>
</feature>
<feature type="active site" description="Proton acceptor" evidence="1">
    <location>
        <position position="172"/>
    </location>
</feature>
<feature type="binding site" evidence="1">
    <location>
        <begin position="34"/>
        <end position="37"/>
    </location>
    <ligand>
        <name>substrate</name>
    </ligand>
</feature>
<feature type="binding site" evidence="1">
    <location>
        <position position="68"/>
    </location>
    <ligand>
        <name>ATP</name>
        <dbReference type="ChEBI" id="CHEBI:30616"/>
    </ligand>
</feature>
<feature type="binding site" evidence="1">
    <location>
        <begin position="122"/>
        <end position="128"/>
    </location>
    <ligand>
        <name>ATP</name>
        <dbReference type="ChEBI" id="CHEBI:30616"/>
    </ligand>
</feature>
<feature type="binding site" evidence="1">
    <location>
        <position position="128"/>
    </location>
    <ligand>
        <name>Mg(2+)</name>
        <dbReference type="ChEBI" id="CHEBI:18420"/>
    </ligand>
</feature>
<feature type="binding site" evidence="1">
    <location>
        <position position="160"/>
    </location>
    <ligand>
        <name>Mg(2+)</name>
        <dbReference type="ChEBI" id="CHEBI:18420"/>
    </ligand>
</feature>
<feature type="binding site" evidence="1">
    <location>
        <position position="221"/>
    </location>
    <ligand>
        <name>substrate</name>
    </ligand>
</feature>
<feature type="site" description="Transition state stabilizer" evidence="1">
    <location>
        <position position="28"/>
    </location>
</feature>
<keyword id="KW-0067">ATP-binding</keyword>
<keyword id="KW-0119">Carbohydrate metabolism</keyword>
<keyword id="KW-0963">Cytoplasm</keyword>
<keyword id="KW-0299">Galactose metabolism</keyword>
<keyword id="KW-0418">Kinase</keyword>
<keyword id="KW-0460">Magnesium</keyword>
<keyword id="KW-0479">Metal-binding</keyword>
<keyword id="KW-0547">Nucleotide-binding</keyword>
<keyword id="KW-0808">Transferase</keyword>
<sequence length="390" mass="42249">MFELSTIYAAFERYFGKPPTRIARAPGRVNLIGEHTDYNDGFVFPMALDRATYVAARPRDDRIVRVFSVKFRDEDQFDLDHIVRDTQRQWVNYIRGVAKGLLARDLPLRGADLLIDSDVPSGSGLSSSAALEVAVGYTFQLLNQINLLGEELALLAQGAEHSFVGVKCGIMDQLIAALGEAGHALLIDCRDLSYRPIPIPTGVRVVVCDSGVRHRLAGSEYNQRRAGCEEAVRILRPALGKIQALRDVRSTDLAEYGHLLPPELLPLVRHVVSENERTLAAADALAAGDVVKMGQLMVESHQSLRDDYCVSIAELDTLVDLALAAPGCYGSRMTGGGFGGSTVSLVEAEKVDEFVAAMIAGYAIRTGRTLQPLVCTAGAGVSCVYASEEE</sequence>
<proteinExistence type="inferred from homology"/>
<protein>
    <recommendedName>
        <fullName evidence="1">Galactokinase</fullName>
        <ecNumber evidence="1">2.7.1.6</ecNumber>
    </recommendedName>
    <alternativeName>
        <fullName evidence="1">Galactose kinase</fullName>
    </alternativeName>
</protein>
<organism>
    <name type="scientific">Chloroflexus aggregans (strain MD-66 / DSM 9485)</name>
    <dbReference type="NCBI Taxonomy" id="326427"/>
    <lineage>
        <taxon>Bacteria</taxon>
        <taxon>Bacillati</taxon>
        <taxon>Chloroflexota</taxon>
        <taxon>Chloroflexia</taxon>
        <taxon>Chloroflexales</taxon>
        <taxon>Chloroflexineae</taxon>
        <taxon>Chloroflexaceae</taxon>
        <taxon>Chloroflexus</taxon>
    </lineage>
</organism>